<comment type="function">
    <text evidence="1 2">Transcriptional regulator that controls a genetic switch in male development. It is necessary and sufficient for initiating male sex determination by directing the development of supporting cell precursors (pre-Sertoli cells) as Sertoli rather than granulosa cells. Involved in different aspects of gene regulation including promoter activation or repression. Binds to the DNA consensus sequence 5'-[AT]AACAA[AT]-3'. SRY HMG box recognizes DNA by partial intercalation in the minor groove and promotes DNA bending. Also involved in pre-mRNA splicing (By similarity). In male adult brain involved in the maintenance of motor functions of dopaminergic neurons (By similarity).</text>
</comment>
<comment type="subunit">
    <text evidence="2">Interacts with CALM, EP300, HDAC3, KPNB1, ZNF208 isoform KRAB-O, PARP1, SLC9A3R2 and WT1. The interaction with EP300 modulates its DNA-binding activity. The interaction with KPNB1 is sensitive to dissociation by Ran in the GTP-bound form. Interaction with PARP1 impaired its DNA-binding activity.</text>
</comment>
<comment type="subcellular location">
    <subcellularLocation>
        <location evidence="2">Nucleus speckle</location>
    </subcellularLocation>
    <subcellularLocation>
        <location evidence="2">Cytoplasm</location>
    </subcellularLocation>
    <subcellularLocation>
        <location evidence="2">Nucleus</location>
    </subcellularLocation>
</comment>
<comment type="similarity">
    <text evidence="5">Belongs to the SRY family.</text>
</comment>
<comment type="online information" name="Protein Spotlight">
    <link uri="https://www.proteinspotlight.org/back_issues/080"/>
    <text>The tenuous nature of sex - Issue 80 of March 2007</text>
</comment>
<dbReference type="EMBL" id="AY424663">
    <property type="protein sequence ID" value="AAR10374.1"/>
    <property type="molecule type" value="Genomic_DNA"/>
</dbReference>
<dbReference type="SMR" id="Q6TC32"/>
<dbReference type="GO" id="GO:0005737">
    <property type="term" value="C:cytoplasm"/>
    <property type="evidence" value="ECO:0007669"/>
    <property type="project" value="UniProtKB-SubCell"/>
</dbReference>
<dbReference type="GO" id="GO:0016607">
    <property type="term" value="C:nuclear speck"/>
    <property type="evidence" value="ECO:0007669"/>
    <property type="project" value="UniProtKB-SubCell"/>
</dbReference>
<dbReference type="GO" id="GO:0005634">
    <property type="term" value="C:nucleus"/>
    <property type="evidence" value="ECO:0000250"/>
    <property type="project" value="UniProtKB"/>
</dbReference>
<dbReference type="GO" id="GO:0005516">
    <property type="term" value="F:calmodulin binding"/>
    <property type="evidence" value="ECO:0007669"/>
    <property type="project" value="UniProtKB-KW"/>
</dbReference>
<dbReference type="GO" id="GO:0001228">
    <property type="term" value="F:DNA-binding transcription activator activity, RNA polymerase II-specific"/>
    <property type="evidence" value="ECO:0007669"/>
    <property type="project" value="TreeGrafter"/>
</dbReference>
<dbReference type="GO" id="GO:0000978">
    <property type="term" value="F:RNA polymerase II cis-regulatory region sequence-specific DNA binding"/>
    <property type="evidence" value="ECO:0007669"/>
    <property type="project" value="TreeGrafter"/>
</dbReference>
<dbReference type="GO" id="GO:0030154">
    <property type="term" value="P:cell differentiation"/>
    <property type="evidence" value="ECO:0007669"/>
    <property type="project" value="UniProtKB-KW"/>
</dbReference>
<dbReference type="GO" id="GO:0030238">
    <property type="term" value="P:male sex determination"/>
    <property type="evidence" value="ECO:0007669"/>
    <property type="project" value="InterPro"/>
</dbReference>
<dbReference type="GO" id="GO:0007548">
    <property type="term" value="P:sex differentiation"/>
    <property type="evidence" value="ECO:0007669"/>
    <property type="project" value="UniProtKB-KW"/>
</dbReference>
<dbReference type="CDD" id="cd22034">
    <property type="entry name" value="HMG-box_SoxA_SRY"/>
    <property type="match status" value="1"/>
</dbReference>
<dbReference type="FunFam" id="1.10.30.10:FF:000002">
    <property type="entry name" value="transcription factor Sox-2"/>
    <property type="match status" value="1"/>
</dbReference>
<dbReference type="Gene3D" id="1.10.30.10">
    <property type="entry name" value="High mobility group box domain"/>
    <property type="match status" value="1"/>
</dbReference>
<dbReference type="InterPro" id="IPR009071">
    <property type="entry name" value="HMG_box_dom"/>
</dbReference>
<dbReference type="InterPro" id="IPR036910">
    <property type="entry name" value="HMG_box_dom_sf"/>
</dbReference>
<dbReference type="InterPro" id="IPR017253">
    <property type="entry name" value="SRY"/>
</dbReference>
<dbReference type="InterPro" id="IPR050140">
    <property type="entry name" value="SRY-related_HMG-box_TF-like"/>
</dbReference>
<dbReference type="PANTHER" id="PTHR10270:SF161">
    <property type="entry name" value="SEX-DETERMINING REGION Y PROTEIN"/>
    <property type="match status" value="1"/>
</dbReference>
<dbReference type="PANTHER" id="PTHR10270">
    <property type="entry name" value="SOX TRANSCRIPTION FACTOR"/>
    <property type="match status" value="1"/>
</dbReference>
<dbReference type="Pfam" id="PF00505">
    <property type="entry name" value="HMG_box"/>
    <property type="match status" value="1"/>
</dbReference>
<dbReference type="PIRSF" id="PIRSF037653">
    <property type="entry name" value="SRY"/>
    <property type="match status" value="1"/>
</dbReference>
<dbReference type="SMART" id="SM00398">
    <property type="entry name" value="HMG"/>
    <property type="match status" value="1"/>
</dbReference>
<dbReference type="SUPFAM" id="SSF47095">
    <property type="entry name" value="HMG-box"/>
    <property type="match status" value="1"/>
</dbReference>
<dbReference type="PROSITE" id="PS50118">
    <property type="entry name" value="HMG_BOX_2"/>
    <property type="match status" value="1"/>
</dbReference>
<name>SRY_PUSHI</name>
<organism>
    <name type="scientific">Pusa hispida</name>
    <name type="common">Ringed seal</name>
    <name type="synonym">Phoca hispida</name>
    <dbReference type="NCBI Taxonomy" id="9718"/>
    <lineage>
        <taxon>Eukaryota</taxon>
        <taxon>Metazoa</taxon>
        <taxon>Chordata</taxon>
        <taxon>Craniata</taxon>
        <taxon>Vertebrata</taxon>
        <taxon>Euteleostomi</taxon>
        <taxon>Mammalia</taxon>
        <taxon>Eutheria</taxon>
        <taxon>Laurasiatheria</taxon>
        <taxon>Carnivora</taxon>
        <taxon>Caniformia</taxon>
        <taxon>Pinnipedia</taxon>
        <taxon>Phocidae</taxon>
        <taxon>Phocinae</taxon>
        <taxon>Pusa</taxon>
    </lineage>
</organism>
<proteinExistence type="inferred from homology"/>
<feature type="chain" id="PRO_0000048699" description="Sex-determining region Y protein">
    <location>
        <begin position="1"/>
        <end position="232"/>
    </location>
</feature>
<feature type="DNA-binding region" description="HMG box" evidence="3">
    <location>
        <begin position="54"/>
        <end position="122"/>
    </location>
</feature>
<feature type="region of interest" description="Disordered" evidence="4">
    <location>
        <begin position="24"/>
        <end position="53"/>
    </location>
</feature>
<gene>
    <name type="primary">SRY</name>
    <name type="synonym">TDF</name>
</gene>
<reference key="1">
    <citation type="submission" date="2003-09" db="EMBL/GenBank/DDBJ databases">
        <title>A phylogeny of the pinnipeds from mitochondrial and single copy nuclear gene sequences.</title>
        <authorList>
            <person name="Kinnear M.W."/>
            <person name="Walker G."/>
            <person name="Amos W."/>
        </authorList>
    </citation>
    <scope>NUCLEOTIDE SEQUENCE [GENOMIC DNA]</scope>
</reference>
<keyword id="KW-0010">Activator</keyword>
<keyword id="KW-0112">Calmodulin-binding</keyword>
<keyword id="KW-0963">Cytoplasm</keyword>
<keyword id="KW-0221">Differentiation</keyword>
<keyword id="KW-0238">DNA-binding</keyword>
<keyword id="KW-0539">Nucleus</keyword>
<keyword id="KW-0726">Sexual differentiation</keyword>
<keyword id="KW-0804">Transcription</keyword>
<keyword id="KW-0805">Transcription regulation</keyword>
<sequence length="232" mass="27136">MFGVLNSNDHRAAVQQRNIPAFGRTSFEPWTDNPTSNYRCETGGNGRDSGQNRVRRPMNAFMVWSRDQRRKVALENPQMQNSEISKQLGYQWKMLTEAEKWPFFEEAQRLQAMHREKYPDYKYRPRRKALPQKSDKLLPAASSSMLCRQVLVDEKWYPFTYRDSCSRAAHSRMEDQLSSSQPVNIANWLLQQEHHYRSTSLRDSPETLAAHLSADPPFYPKEQLGLSDAYFP</sequence>
<accession>Q6TC32</accession>
<protein>
    <recommendedName>
        <fullName>Sex-determining region Y protein</fullName>
    </recommendedName>
    <alternativeName>
        <fullName>Testis-determining factor</fullName>
    </alternativeName>
</protein>
<evidence type="ECO:0000250" key="1">
    <source>
        <dbReference type="UniProtKB" id="P36394"/>
    </source>
</evidence>
<evidence type="ECO:0000250" key="2">
    <source>
        <dbReference type="UniProtKB" id="Q05066"/>
    </source>
</evidence>
<evidence type="ECO:0000255" key="3">
    <source>
        <dbReference type="PROSITE-ProRule" id="PRU00267"/>
    </source>
</evidence>
<evidence type="ECO:0000256" key="4">
    <source>
        <dbReference type="SAM" id="MobiDB-lite"/>
    </source>
</evidence>
<evidence type="ECO:0000305" key="5"/>